<keyword id="KW-0963">Cytoplasm</keyword>
<keyword id="KW-1185">Reference proteome</keyword>
<keyword id="KW-0694">RNA-binding</keyword>
<feature type="chain" id="PRO_0000119060" description="Enhancer of mRNA-decapping protein 3">
    <location>
        <begin position="1"/>
        <end position="505"/>
    </location>
</feature>
<feature type="domain" description="Sm" evidence="5">
    <location>
        <begin position="1"/>
        <end position="68"/>
    </location>
</feature>
<feature type="domain" description="DFDF" evidence="4">
    <location>
        <begin position="187"/>
        <end position="223"/>
    </location>
</feature>
<feature type="domain" description="YjeF N-terminal" evidence="3">
    <location>
        <begin position="280"/>
        <end position="484"/>
    </location>
</feature>
<feature type="region of interest" description="Required for P-body targeting and interaction with DCP1A" evidence="1">
    <location>
        <begin position="1"/>
        <end position="79"/>
    </location>
</feature>
<feature type="region of interest" description="Disordered" evidence="6">
    <location>
        <begin position="84"/>
        <end position="181"/>
    </location>
</feature>
<feature type="region of interest" description="Required for interaction with DDX6" evidence="1">
    <location>
        <begin position="186"/>
        <end position="293"/>
    </location>
</feature>
<feature type="region of interest" description="Disordered" evidence="6">
    <location>
        <begin position="219"/>
        <end position="243"/>
    </location>
</feature>
<feature type="compositionally biased region" description="Polar residues" evidence="6">
    <location>
        <begin position="91"/>
        <end position="113"/>
    </location>
</feature>
<feature type="compositionally biased region" description="Polar residues" evidence="6">
    <location>
        <begin position="122"/>
        <end position="132"/>
    </location>
</feature>
<feature type="compositionally biased region" description="Polar residues" evidence="6">
    <location>
        <begin position="155"/>
        <end position="177"/>
    </location>
</feature>
<gene>
    <name type="primary">edc3</name>
    <name type="synonym">yjdc</name>
</gene>
<sequence length="505" mass="55576">MAADWLGSIVSINCGNTLGVYQGCVSAVDRINQTISLSQPFHNGVKCLVPEVTFRAGDISELKILEIPSESLKYTSDQLNDHSTGFGYLPTRQQNGTGKQKQTVAHNSAQNIPGQEEGKASEPSSTSPQPCSKSFVDRHNEAVNQPKNFRRRHNSLGSSSSRYPNQVTPKKSGTKNGQLKARDDECFGDELEEIPDTDFDFEGNLALFDKAAVFEEIDTHERRGGGGTRSRGTPNERPPTYRHDENILESEPIVYRKIVVPQSGGQEYCTDSGLVVPSISYVLHKKLLCVAEKHGLSVERRLEMSGVCASQMALTLLGGPNRLNPKNVHQRPTVALLCGPHVKGAQGISCGRHLANYDVDIILFLPNFVKMLEPVTNELNLFCQTQGKQVSSVKDLPECPVDLVINCLDCNENAFLCDQPWYRAAVDWANHNRAPVLNIDPPVGDHVQGIHAKWSLELGLPLALGEQAGRIYLCDIGIPQKVFREVGISYHSPFGCKFVIPLHSM</sequence>
<name>EDC3_XENLA</name>
<reference key="1">
    <citation type="submission" date="2004-10" db="EMBL/GenBank/DDBJ databases">
        <authorList>
            <consortium name="NIH - Xenopus Gene Collection (XGC) project"/>
        </authorList>
    </citation>
    <scope>NUCLEOTIDE SEQUENCE [LARGE SCALE MRNA]</scope>
    <source>
        <tissue>Ovary</tissue>
    </source>
</reference>
<organism>
    <name type="scientific">Xenopus laevis</name>
    <name type="common">African clawed frog</name>
    <dbReference type="NCBI Taxonomy" id="8355"/>
    <lineage>
        <taxon>Eukaryota</taxon>
        <taxon>Metazoa</taxon>
        <taxon>Chordata</taxon>
        <taxon>Craniata</taxon>
        <taxon>Vertebrata</taxon>
        <taxon>Euteleostomi</taxon>
        <taxon>Amphibia</taxon>
        <taxon>Batrachia</taxon>
        <taxon>Anura</taxon>
        <taxon>Pipoidea</taxon>
        <taxon>Pipidae</taxon>
        <taxon>Xenopodinae</taxon>
        <taxon>Xenopus</taxon>
        <taxon>Xenopus</taxon>
    </lineage>
</organism>
<proteinExistence type="evidence at transcript level"/>
<dbReference type="EMBL" id="BC084225">
    <property type="protein sequence ID" value="AAH84225.1"/>
    <property type="molecule type" value="mRNA"/>
</dbReference>
<dbReference type="RefSeq" id="NP_001088234.1">
    <property type="nucleotide sequence ID" value="NM_001094765.1"/>
</dbReference>
<dbReference type="SMR" id="Q5XH48"/>
<dbReference type="BioGRID" id="105145">
    <property type="interactions" value="1"/>
</dbReference>
<dbReference type="IntAct" id="Q5XH48">
    <property type="interactions" value="1"/>
</dbReference>
<dbReference type="DNASU" id="495065"/>
<dbReference type="GeneID" id="495065"/>
<dbReference type="KEGG" id="xla:495065"/>
<dbReference type="AGR" id="Xenbase:XB-GENE-5890837"/>
<dbReference type="CTD" id="495065"/>
<dbReference type="Xenbase" id="XB-GENE-5890837">
    <property type="gene designation" value="edc3.S"/>
</dbReference>
<dbReference type="OrthoDB" id="10030313at2759"/>
<dbReference type="Proteomes" id="UP000186698">
    <property type="component" value="Chromosome 3S"/>
</dbReference>
<dbReference type="Bgee" id="495065">
    <property type="expression patterns" value="Expressed in ovary and 19 other cell types or tissues"/>
</dbReference>
<dbReference type="GO" id="GO:0000932">
    <property type="term" value="C:P-body"/>
    <property type="evidence" value="ECO:0000318"/>
    <property type="project" value="GO_Central"/>
</dbReference>
<dbReference type="GO" id="GO:0003729">
    <property type="term" value="F:mRNA binding"/>
    <property type="evidence" value="ECO:0000318"/>
    <property type="project" value="GO_Central"/>
</dbReference>
<dbReference type="GO" id="GO:0031087">
    <property type="term" value="P:deadenylation-independent decapping of nuclear-transcribed mRNA"/>
    <property type="evidence" value="ECO:0000318"/>
    <property type="project" value="GO_Central"/>
</dbReference>
<dbReference type="GO" id="GO:0033962">
    <property type="term" value="P:P-body assembly"/>
    <property type="evidence" value="ECO:0000318"/>
    <property type="project" value="GO_Central"/>
</dbReference>
<dbReference type="CDD" id="cd01737">
    <property type="entry name" value="LSm16_N"/>
    <property type="match status" value="1"/>
</dbReference>
<dbReference type="FunFam" id="2.30.30.100:FF:000026">
    <property type="entry name" value="Enhancer of mRNA-decapping protein 3"/>
    <property type="match status" value="1"/>
</dbReference>
<dbReference type="FunFam" id="3.40.50.10260:FF:000001">
    <property type="entry name" value="Enhancer of mRNA-decapping protein 3"/>
    <property type="match status" value="1"/>
</dbReference>
<dbReference type="Gene3D" id="2.30.30.100">
    <property type="match status" value="1"/>
</dbReference>
<dbReference type="Gene3D" id="3.40.50.10260">
    <property type="entry name" value="YjeF N-terminal domain"/>
    <property type="match status" value="1"/>
</dbReference>
<dbReference type="InterPro" id="IPR025762">
    <property type="entry name" value="DFDF"/>
</dbReference>
<dbReference type="InterPro" id="IPR019050">
    <property type="entry name" value="FDF_dom"/>
</dbReference>
<dbReference type="InterPro" id="IPR025609">
    <property type="entry name" value="Lsm14-like_N"/>
</dbReference>
<dbReference type="InterPro" id="IPR034107">
    <property type="entry name" value="Lsm16_N"/>
</dbReference>
<dbReference type="InterPro" id="IPR047575">
    <property type="entry name" value="Sm"/>
</dbReference>
<dbReference type="InterPro" id="IPR004443">
    <property type="entry name" value="YjeF_N_dom"/>
</dbReference>
<dbReference type="InterPro" id="IPR036652">
    <property type="entry name" value="YjeF_N_dom_sf"/>
</dbReference>
<dbReference type="PANTHER" id="PTHR13612">
    <property type="entry name" value="ENHANCER OF MRNA-DECAPPING PROTEIN 3"/>
    <property type="match status" value="1"/>
</dbReference>
<dbReference type="PANTHER" id="PTHR13612:SF0">
    <property type="entry name" value="ENHANCER OF MRNA-DECAPPING PROTEIN 3"/>
    <property type="match status" value="1"/>
</dbReference>
<dbReference type="Pfam" id="PF16598">
    <property type="entry name" value="Edc3_linker"/>
    <property type="match status" value="1"/>
</dbReference>
<dbReference type="Pfam" id="PF09532">
    <property type="entry name" value="FDF"/>
    <property type="match status" value="1"/>
</dbReference>
<dbReference type="Pfam" id="PF12701">
    <property type="entry name" value="LSM14"/>
    <property type="match status" value="1"/>
</dbReference>
<dbReference type="Pfam" id="PF03853">
    <property type="entry name" value="YjeF_N"/>
    <property type="match status" value="1"/>
</dbReference>
<dbReference type="SMART" id="SM01199">
    <property type="entry name" value="FDF"/>
    <property type="match status" value="1"/>
</dbReference>
<dbReference type="SMART" id="SM01271">
    <property type="entry name" value="LSM14"/>
    <property type="match status" value="1"/>
</dbReference>
<dbReference type="SUPFAM" id="SSF64153">
    <property type="entry name" value="YjeF N-terminal domain-like"/>
    <property type="match status" value="1"/>
</dbReference>
<dbReference type="PROSITE" id="PS51512">
    <property type="entry name" value="DFDF"/>
    <property type="match status" value="1"/>
</dbReference>
<dbReference type="PROSITE" id="PS52002">
    <property type="entry name" value="SM"/>
    <property type="match status" value="1"/>
</dbReference>
<dbReference type="PROSITE" id="PS51385">
    <property type="entry name" value="YJEF_N"/>
    <property type="match status" value="1"/>
</dbReference>
<evidence type="ECO:0000250" key="1"/>
<evidence type="ECO:0000250" key="2">
    <source>
        <dbReference type="UniProtKB" id="Q96F86"/>
    </source>
</evidence>
<evidence type="ECO:0000255" key="3">
    <source>
        <dbReference type="PROSITE-ProRule" id="PRU00719"/>
    </source>
</evidence>
<evidence type="ECO:0000255" key="4">
    <source>
        <dbReference type="PROSITE-ProRule" id="PRU00845"/>
    </source>
</evidence>
<evidence type="ECO:0000255" key="5">
    <source>
        <dbReference type="PROSITE-ProRule" id="PRU01346"/>
    </source>
</evidence>
<evidence type="ECO:0000256" key="6">
    <source>
        <dbReference type="SAM" id="MobiDB-lite"/>
    </source>
</evidence>
<evidence type="ECO:0000305" key="7"/>
<comment type="function">
    <text evidence="2">Binds single-stranded RNA. Involved in the process of mRNA degradation and in the positive regulation of mRNA decapping (By similarity).</text>
</comment>
<comment type="subcellular location">
    <subcellularLocation>
        <location evidence="1">Cytoplasm</location>
        <location evidence="1">P-body</location>
    </subcellularLocation>
    <text evidence="1">Processing bodies (PB).</text>
</comment>
<comment type="domain">
    <text evidence="1">The DFDF domain is unstructured by itself. It assumes a helical fold upon interaction with other proteins (By similarity).</text>
</comment>
<comment type="similarity">
    <text evidence="7">Belongs to the EDC3 family.</text>
</comment>
<protein>
    <recommendedName>
        <fullName>Enhancer of mRNA-decapping protein 3</fullName>
    </recommendedName>
    <alternativeName>
        <fullName>YjeF domain-containing protein 1</fullName>
    </alternativeName>
</protein>
<accession>Q5XH48</accession>